<gene>
    <name evidence="2" type="primary">bioH</name>
    <name type="ordered locus">CKO_04834</name>
</gene>
<keyword id="KW-0093">Biotin biosynthesis</keyword>
<keyword id="KW-0963">Cytoplasm</keyword>
<keyword id="KW-0378">Hydrolase</keyword>
<keyword id="KW-1185">Reference proteome</keyword>
<keyword id="KW-0719">Serine esterase</keyword>
<name>BIOH_CITK8</name>
<evidence type="ECO:0000255" key="1"/>
<evidence type="ECO:0000255" key="2">
    <source>
        <dbReference type="HAMAP-Rule" id="MF_01260"/>
    </source>
</evidence>
<accession>A8AQW5</accession>
<feature type="chain" id="PRO_1000067263" description="Pimeloyl-[acyl-carrier protein] methyl ester esterase">
    <location>
        <begin position="1"/>
        <end position="256"/>
    </location>
</feature>
<feature type="domain" description="AB hydrolase-1" evidence="1">
    <location>
        <begin position="15"/>
        <end position="242"/>
    </location>
</feature>
<feature type="active site" description="Nucleophile" evidence="2">
    <location>
        <position position="82"/>
    </location>
</feature>
<feature type="active site" evidence="2">
    <location>
        <position position="207"/>
    </location>
</feature>
<feature type="active site" evidence="2">
    <location>
        <position position="235"/>
    </location>
</feature>
<feature type="binding site" evidence="2">
    <location>
        <position position="22"/>
    </location>
    <ligand>
        <name>substrate</name>
    </ligand>
</feature>
<feature type="binding site" evidence="2">
    <location>
        <begin position="82"/>
        <end position="83"/>
    </location>
    <ligand>
        <name>substrate</name>
    </ligand>
</feature>
<feature type="binding site" evidence="2">
    <location>
        <begin position="143"/>
        <end position="147"/>
    </location>
    <ligand>
        <name>substrate</name>
    </ligand>
</feature>
<feature type="binding site" evidence="2">
    <location>
        <position position="235"/>
    </location>
    <ligand>
        <name>substrate</name>
    </ligand>
</feature>
<reference key="1">
    <citation type="submission" date="2007-08" db="EMBL/GenBank/DDBJ databases">
        <authorList>
            <consortium name="The Citrobacter koseri Genome Sequencing Project"/>
            <person name="McClelland M."/>
            <person name="Sanderson E.K."/>
            <person name="Porwollik S."/>
            <person name="Spieth J."/>
            <person name="Clifton W.S."/>
            <person name="Latreille P."/>
            <person name="Courtney L."/>
            <person name="Wang C."/>
            <person name="Pepin K."/>
            <person name="Bhonagiri V."/>
            <person name="Nash W."/>
            <person name="Johnson M."/>
            <person name="Thiruvilangam P."/>
            <person name="Wilson R."/>
        </authorList>
    </citation>
    <scope>NUCLEOTIDE SEQUENCE [LARGE SCALE GENOMIC DNA]</scope>
    <source>
        <strain>ATCC BAA-895 / CDC 4225-83 / SGSC4696</strain>
    </source>
</reference>
<sequence length="256" mass="28244">MNDIWWQTEGQGNCHLVLLHGWGLNAEVWNCIREELSAHFTLHLVDLPGFGRSQGFGAMSLEQMAKHVLKQAPDKAVWLGWSLGGLVASQVALTHPERVQALVTVASSPCFSAREAWPGIKPDILAGFQQQLSEDFQRTVERFLALQTLGTETARQDARTLKSAVLALPMPEVAVLNGGLEILKTADLREPLKSLTMPFLRLYGYLDGLVPRKVVPMLDAAWPESESQVFAKAAHAPFISHPGEFCQALMALKQKI</sequence>
<comment type="function">
    <text evidence="2">The physiological role of BioH is to remove the methyl group introduced by BioC when the pimeloyl moiety is complete. It allows to synthesize pimeloyl-ACP via the fatty acid synthetic pathway through the hydrolysis of the ester bonds of pimeloyl-ACP esters.</text>
</comment>
<comment type="catalytic activity">
    <reaction evidence="2">
        <text>6-carboxyhexanoyl-[ACP] methyl ester + H2O = 6-carboxyhexanoyl-[ACP] + methanol + H(+)</text>
        <dbReference type="Rhea" id="RHEA:42700"/>
        <dbReference type="Rhea" id="RHEA-COMP:9955"/>
        <dbReference type="Rhea" id="RHEA-COMP:10186"/>
        <dbReference type="ChEBI" id="CHEBI:15377"/>
        <dbReference type="ChEBI" id="CHEBI:15378"/>
        <dbReference type="ChEBI" id="CHEBI:17790"/>
        <dbReference type="ChEBI" id="CHEBI:78846"/>
        <dbReference type="ChEBI" id="CHEBI:82735"/>
        <dbReference type="EC" id="3.1.1.85"/>
    </reaction>
</comment>
<comment type="pathway">
    <text evidence="2">Cofactor biosynthesis; biotin biosynthesis.</text>
</comment>
<comment type="subunit">
    <text evidence="2">Monomer.</text>
</comment>
<comment type="subcellular location">
    <subcellularLocation>
        <location evidence="2">Cytoplasm</location>
    </subcellularLocation>
</comment>
<comment type="similarity">
    <text evidence="2">Belongs to the AB hydrolase superfamily. Carboxylesterase BioH family.</text>
</comment>
<protein>
    <recommendedName>
        <fullName evidence="2">Pimeloyl-[acyl-carrier protein] methyl ester esterase</fullName>
        <ecNumber evidence="2">3.1.1.85</ecNumber>
    </recommendedName>
    <alternativeName>
        <fullName evidence="2">Biotin synthesis protein BioH</fullName>
    </alternativeName>
    <alternativeName>
        <fullName evidence="2">Carboxylesterase BioH</fullName>
    </alternativeName>
</protein>
<proteinExistence type="inferred from homology"/>
<dbReference type="EC" id="3.1.1.85" evidence="2"/>
<dbReference type="EMBL" id="CP000822">
    <property type="protein sequence ID" value="ABV15879.1"/>
    <property type="molecule type" value="Genomic_DNA"/>
</dbReference>
<dbReference type="RefSeq" id="WP_012135519.1">
    <property type="nucleotide sequence ID" value="NC_009792.1"/>
</dbReference>
<dbReference type="SMR" id="A8AQW5"/>
<dbReference type="STRING" id="290338.CKO_04834"/>
<dbReference type="ESTHER" id="citk8-bioh">
    <property type="family name" value="BioH"/>
</dbReference>
<dbReference type="GeneID" id="45138333"/>
<dbReference type="KEGG" id="cko:CKO_04834"/>
<dbReference type="HOGENOM" id="CLU_020336_12_2_6"/>
<dbReference type="OrthoDB" id="9780744at2"/>
<dbReference type="UniPathway" id="UPA00078"/>
<dbReference type="Proteomes" id="UP000008148">
    <property type="component" value="Chromosome"/>
</dbReference>
<dbReference type="GO" id="GO:0005737">
    <property type="term" value="C:cytoplasm"/>
    <property type="evidence" value="ECO:0007669"/>
    <property type="project" value="UniProtKB-SubCell"/>
</dbReference>
<dbReference type="GO" id="GO:0090499">
    <property type="term" value="F:pimelyl-[acyl-carrier protein] methyl ester esterase activity"/>
    <property type="evidence" value="ECO:0007669"/>
    <property type="project" value="UniProtKB-EC"/>
</dbReference>
<dbReference type="GO" id="GO:0009102">
    <property type="term" value="P:biotin biosynthetic process"/>
    <property type="evidence" value="ECO:0007669"/>
    <property type="project" value="UniProtKB-UniRule"/>
</dbReference>
<dbReference type="FunFam" id="3.40.50.1820:FF:000045">
    <property type="entry name" value="Pimeloyl-[acyl-carrier protein] methyl ester esterase"/>
    <property type="match status" value="1"/>
</dbReference>
<dbReference type="Gene3D" id="3.40.50.1820">
    <property type="entry name" value="alpha/beta hydrolase"/>
    <property type="match status" value="1"/>
</dbReference>
<dbReference type="HAMAP" id="MF_01260">
    <property type="entry name" value="Carboxylester"/>
    <property type="match status" value="1"/>
</dbReference>
<dbReference type="InterPro" id="IPR000073">
    <property type="entry name" value="AB_hydrolase_1"/>
</dbReference>
<dbReference type="InterPro" id="IPR029058">
    <property type="entry name" value="AB_hydrolase_fold"/>
</dbReference>
<dbReference type="InterPro" id="IPR010076">
    <property type="entry name" value="BioH"/>
</dbReference>
<dbReference type="InterPro" id="IPR050228">
    <property type="entry name" value="Carboxylesterase_BioH"/>
</dbReference>
<dbReference type="NCBIfam" id="TIGR01738">
    <property type="entry name" value="bioH"/>
    <property type="match status" value="1"/>
</dbReference>
<dbReference type="NCBIfam" id="NF007674">
    <property type="entry name" value="PRK10349.1"/>
    <property type="match status" value="1"/>
</dbReference>
<dbReference type="PANTHER" id="PTHR43194">
    <property type="entry name" value="HYDROLASE ALPHA/BETA FOLD FAMILY"/>
    <property type="match status" value="1"/>
</dbReference>
<dbReference type="PANTHER" id="PTHR43194:SF5">
    <property type="entry name" value="PIMELOYL-[ACYL-CARRIER PROTEIN] METHYL ESTER ESTERASE"/>
    <property type="match status" value="1"/>
</dbReference>
<dbReference type="Pfam" id="PF00561">
    <property type="entry name" value="Abhydrolase_1"/>
    <property type="match status" value="1"/>
</dbReference>
<dbReference type="SUPFAM" id="SSF53474">
    <property type="entry name" value="alpha/beta-Hydrolases"/>
    <property type="match status" value="1"/>
</dbReference>
<organism>
    <name type="scientific">Citrobacter koseri (strain ATCC BAA-895 / CDC 4225-83 / SGSC4696)</name>
    <dbReference type="NCBI Taxonomy" id="290338"/>
    <lineage>
        <taxon>Bacteria</taxon>
        <taxon>Pseudomonadati</taxon>
        <taxon>Pseudomonadota</taxon>
        <taxon>Gammaproteobacteria</taxon>
        <taxon>Enterobacterales</taxon>
        <taxon>Enterobacteriaceae</taxon>
        <taxon>Citrobacter</taxon>
    </lineage>
</organism>